<proteinExistence type="predicted"/>
<reference key="1">
    <citation type="journal article" date="2000" name="Nature">
        <title>Complete genome sequence of Pseudomonas aeruginosa PAO1, an opportunistic pathogen.</title>
        <authorList>
            <person name="Stover C.K."/>
            <person name="Pham X.-Q.T."/>
            <person name="Erwin A.L."/>
            <person name="Mizoguchi S.D."/>
            <person name="Warrener P."/>
            <person name="Hickey M.J."/>
            <person name="Brinkman F.S.L."/>
            <person name="Hufnagle W.O."/>
            <person name="Kowalik D.J."/>
            <person name="Lagrou M."/>
            <person name="Garber R.L."/>
            <person name="Goltry L."/>
            <person name="Tolentino E."/>
            <person name="Westbrock-Wadman S."/>
            <person name="Yuan Y."/>
            <person name="Brody L.L."/>
            <person name="Coulter S.N."/>
            <person name="Folger K.R."/>
            <person name="Kas A."/>
            <person name="Larbig K."/>
            <person name="Lim R.M."/>
            <person name="Smith K.A."/>
            <person name="Spencer D.H."/>
            <person name="Wong G.K.-S."/>
            <person name="Wu Z."/>
            <person name="Paulsen I.T."/>
            <person name="Reizer J."/>
            <person name="Saier M.H. Jr."/>
            <person name="Hancock R.E.W."/>
            <person name="Lory S."/>
            <person name="Olson M.V."/>
        </authorList>
    </citation>
    <scope>NUCLEOTIDE SEQUENCE [LARGE SCALE GENOMIC DNA]</scope>
    <source>
        <strain>ATCC 15692 / DSM 22644 / CIP 104116 / JCM 14847 / LMG 12228 / 1C / PRS 101 / PAO1</strain>
    </source>
</reference>
<reference key="2">
    <citation type="journal article" date="1991" name="J. Bacteriol.">
        <title>The agmR gene, an environmentally responsive gene, complements defective glpR, which encodes the putative activator for glycerol metabolism in Pseudomonas aeruginosa.</title>
        <authorList>
            <person name="Schweizer H.P."/>
        </authorList>
    </citation>
    <scope>NUCLEOTIDE SEQUENCE [GENOMIC DNA] OF 1-77</scope>
</reference>
<protein>
    <recommendedName>
        <fullName>Uncharacterized protein PA1977</fullName>
    </recommendedName>
</protein>
<name>Y1977_PSEAE</name>
<organism>
    <name type="scientific">Pseudomonas aeruginosa (strain ATCC 15692 / DSM 22644 / CIP 104116 / JCM 14847 / LMG 12228 / 1C / PRS 101 / PAO1)</name>
    <dbReference type="NCBI Taxonomy" id="208964"/>
    <lineage>
        <taxon>Bacteria</taxon>
        <taxon>Pseudomonadati</taxon>
        <taxon>Pseudomonadota</taxon>
        <taxon>Gammaproteobacteria</taxon>
        <taxon>Pseudomonadales</taxon>
        <taxon>Pseudomonadaceae</taxon>
        <taxon>Pseudomonas</taxon>
    </lineage>
</organism>
<feature type="chain" id="PRO_0000206251" description="Uncharacterized protein PA1977">
    <location>
        <begin position="1"/>
        <end position="287"/>
    </location>
</feature>
<feature type="transmembrane region" description="Helical" evidence="1">
    <location>
        <begin position="7"/>
        <end position="28"/>
    </location>
</feature>
<feature type="transmembrane region" description="Helical" evidence="1">
    <location>
        <begin position="32"/>
        <end position="54"/>
    </location>
</feature>
<feature type="transmembrane region" description="Helical" evidence="1">
    <location>
        <begin position="67"/>
        <end position="86"/>
    </location>
</feature>
<feature type="transmembrane region" description="Helical" evidence="1">
    <location>
        <begin position="91"/>
        <end position="113"/>
    </location>
</feature>
<feature type="transmembrane region" description="Helical" evidence="1">
    <location>
        <begin position="120"/>
        <end position="139"/>
    </location>
</feature>
<feature type="transmembrane region" description="Helical" evidence="1">
    <location>
        <begin position="144"/>
        <end position="163"/>
    </location>
</feature>
<feature type="transmembrane region" description="Helical" evidence="1">
    <location>
        <begin position="170"/>
        <end position="192"/>
    </location>
</feature>
<feature type="transmembrane region" description="Helical" evidence="1">
    <location>
        <begin position="202"/>
        <end position="224"/>
    </location>
</feature>
<feature type="transmembrane region" description="Helical" evidence="1">
    <location>
        <begin position="231"/>
        <end position="253"/>
    </location>
</feature>
<feature type="transmembrane region" description="Helical" evidence="1">
    <location>
        <begin position="263"/>
        <end position="280"/>
    </location>
</feature>
<feature type="domain" description="EamA 1">
    <location>
        <begin position="15"/>
        <end position="136"/>
    </location>
</feature>
<feature type="domain" description="EamA 2">
    <location>
        <begin position="155"/>
        <end position="276"/>
    </location>
</feature>
<gene>
    <name type="ordered locus">PA1977</name>
</gene>
<evidence type="ECO:0000255" key="1"/>
<evidence type="ECO:0000305" key="2"/>
<comment type="subcellular location">
    <subcellularLocation>
        <location evidence="2">Cell membrane</location>
        <topology evidence="2">Multi-pass membrane protein</topology>
    </subcellularLocation>
</comment>
<keyword id="KW-1003">Cell membrane</keyword>
<keyword id="KW-0472">Membrane</keyword>
<keyword id="KW-1185">Reference proteome</keyword>
<keyword id="KW-0677">Repeat</keyword>
<keyword id="KW-0812">Transmembrane</keyword>
<keyword id="KW-1133">Transmembrane helix</keyword>
<accession>P29370</accession>
<sequence length="287" mass="29094">MPDRRTLLLTVLAMLAFAGNSLLCRAALKDTAIDAVSFTALRLFSGALMLAVLLHLRRRPATPARGGWRGAAALFVYAAAFSYAYVQLDAGTGALLLFGAVQVTLLLAGLLRGERLGGQALLGFLLALGGLLFLLLPGASAPPLGGALLMLLSGLAWGLYTLLGRGGGDPLAVSAGNFLRALAFAALLLLAFHGQLRLDGAGLAYALLSGALASGLGYAVWYSALPGLTAIQGASVQLSVPVLAALCGALLLGEPLAPRLPPATLAVLGGIALILAPRLGRAAREGA</sequence>
<dbReference type="EMBL" id="AE004091">
    <property type="protein sequence ID" value="AAG05365.1"/>
    <property type="molecule type" value="Genomic_DNA"/>
</dbReference>
<dbReference type="EMBL" id="M60805">
    <property type="protein sequence ID" value="AAA25828.1"/>
    <property type="molecule type" value="Genomic_DNA"/>
</dbReference>
<dbReference type="PIR" id="E83398">
    <property type="entry name" value="E83398"/>
</dbReference>
<dbReference type="RefSeq" id="NP_250667.1">
    <property type="nucleotide sequence ID" value="NC_002516.2"/>
</dbReference>
<dbReference type="RefSeq" id="WP_003113465.1">
    <property type="nucleotide sequence ID" value="NZ_QZGE01000030.1"/>
</dbReference>
<dbReference type="SMR" id="P29370"/>
<dbReference type="STRING" id="208964.PA1977"/>
<dbReference type="PaxDb" id="208964-PA1977"/>
<dbReference type="GeneID" id="878077"/>
<dbReference type="KEGG" id="pae:PA1977"/>
<dbReference type="PATRIC" id="fig|208964.12.peg.2060"/>
<dbReference type="PseudoCAP" id="PA1977"/>
<dbReference type="HOGENOM" id="CLU_069324_0_0_6"/>
<dbReference type="InParanoid" id="P29370"/>
<dbReference type="OrthoDB" id="321830at2"/>
<dbReference type="PhylomeDB" id="P29370"/>
<dbReference type="BioCyc" id="PAER208964:G1FZ6-2015-MONOMER"/>
<dbReference type="Proteomes" id="UP000002438">
    <property type="component" value="Chromosome"/>
</dbReference>
<dbReference type="GO" id="GO:0005886">
    <property type="term" value="C:plasma membrane"/>
    <property type="evidence" value="ECO:0007669"/>
    <property type="project" value="UniProtKB-SubCell"/>
</dbReference>
<dbReference type="InterPro" id="IPR050638">
    <property type="entry name" value="AA-Vitamin_Transporters"/>
</dbReference>
<dbReference type="InterPro" id="IPR000620">
    <property type="entry name" value="EamA_dom"/>
</dbReference>
<dbReference type="PANTHER" id="PTHR32322:SF9">
    <property type="entry name" value="AMINO-ACID METABOLITE EFFLUX PUMP-RELATED"/>
    <property type="match status" value="1"/>
</dbReference>
<dbReference type="PANTHER" id="PTHR32322">
    <property type="entry name" value="INNER MEMBRANE TRANSPORTER"/>
    <property type="match status" value="1"/>
</dbReference>
<dbReference type="Pfam" id="PF00892">
    <property type="entry name" value="EamA"/>
    <property type="match status" value="2"/>
</dbReference>
<dbReference type="SUPFAM" id="SSF103481">
    <property type="entry name" value="Multidrug resistance efflux transporter EmrE"/>
    <property type="match status" value="2"/>
</dbReference>